<reference key="1">
    <citation type="journal article" date="1988" name="DNA">
        <title>p1B15: a cDNA clone of the rat mRNA encoding cyclophilin.</title>
        <authorList>
            <person name="Danielson P.E."/>
            <person name="Forss-Petter S."/>
            <person name="Brow M.A."/>
            <person name="Calavetta L."/>
            <person name="Douglass J."/>
            <person name="Milner R.J."/>
            <person name="Sutcliffe J.G."/>
        </authorList>
    </citation>
    <scope>NUCLEOTIDE SEQUENCE [MRNA]</scope>
    <source>
        <strain>Sprague-Dawley</strain>
        <tissue>Brain</tissue>
    </source>
</reference>
<reference key="2">
    <citation type="journal article" date="1991" name="Brain Res. Mol. Brain Res.">
        <title>Molecular cloning and regional distribution of rat brain cyclophilin.</title>
        <authorList>
            <person name="Lad R.P."/>
            <person name="Smith M.A."/>
            <person name="Hilt D.C."/>
        </authorList>
    </citation>
    <scope>NUCLEOTIDE SEQUENCE [MRNA]</scope>
    <source>
        <tissue>Brain</tissue>
    </source>
</reference>
<reference key="3">
    <citation type="journal article" date="1985" name="Biochim. Biophys. Acta">
        <title>P31, a mammalian housekeeping protein encoded by a multigene family containing a high proportion of pseudogenes.</title>
        <authorList>
            <person name="Theodor L."/>
            <person name="Peleg D."/>
            <person name="Meyuhas O."/>
        </authorList>
    </citation>
    <scope>NUCLEOTIDE SEQUENCE [MRNA]</scope>
    <source>
        <strain>Sabra</strain>
    </source>
</reference>
<reference key="4">
    <citation type="journal article" date="2004" name="Genome Res.">
        <title>The status, quality, and expansion of the NIH full-length cDNA project: the Mammalian Gene Collection (MGC).</title>
        <authorList>
            <consortium name="The MGC Project Team"/>
        </authorList>
    </citation>
    <scope>NUCLEOTIDE SEQUENCE [LARGE SCALE MRNA]</scope>
    <source>
        <tissue>Ovary</tissue>
        <tissue>Pituitary</tissue>
    </source>
</reference>
<reference key="5">
    <citation type="submission" date="2007-07" db="UniProtKB">
        <authorList>
            <person name="Lubec G."/>
            <person name="Afjehi-Sadat L."/>
            <person name="Chen W.-Q."/>
            <person name="Kang S.U."/>
        </authorList>
    </citation>
    <scope>PROTEIN SEQUENCE OF 2-31; 56-69; 77-125; 132-144 AND 155-164</scope>
    <scope>IDENTIFICATION BY MASS SPECTROMETRY</scope>
    <source>
        <strain>Sprague-Dawley</strain>
        <tissue>Brain</tissue>
        <tissue>Hippocampus</tissue>
        <tissue>Spinal cord</tissue>
    </source>
</reference>
<reference key="6">
    <citation type="journal article" date="1992" name="Biochem. J.">
        <title>Purification and N-terminal sequencing of peptidyl-prolyl cis-trans-isomerase from rat liver mitochondrial matrix reveals the existence of a distinct mitochondrial cyclophilin.</title>
        <authorList>
            <person name="Connern C.P."/>
            <person name="Halestrap A.P."/>
        </authorList>
    </citation>
    <scope>PROTEIN SEQUENCE OF 2-29</scope>
    <source>
        <tissue>Liver</tissue>
    </source>
</reference>
<reference key="7">
    <citation type="submission" date="2007-02" db="UniProtKB">
        <authorList>
            <person name="Lubec G."/>
            <person name="Chen W.-Q."/>
        </authorList>
    </citation>
    <scope>ACETYLATION AT VAL-2</scope>
    <scope>IDENTIFICATION BY MASS SPECTROMETRY</scope>
</reference>
<gene>
    <name type="primary">Ppia</name>
</gene>
<dbReference type="EC" id="5.2.1.8" evidence="2"/>
<dbReference type="EMBL" id="M19533">
    <property type="protein sequence ID" value="AAA41009.1"/>
    <property type="molecule type" value="mRNA"/>
</dbReference>
<dbReference type="EMBL" id="M25637">
    <property type="protein sequence ID" value="AAB59719.1"/>
    <property type="molecule type" value="mRNA"/>
</dbReference>
<dbReference type="EMBL" id="BC059141">
    <property type="protein sequence ID" value="AAH59141.1"/>
    <property type="molecule type" value="mRNA"/>
</dbReference>
<dbReference type="EMBL" id="BC091153">
    <property type="protein sequence ID" value="AAH91153.1"/>
    <property type="molecule type" value="mRNA"/>
</dbReference>
<dbReference type="PIR" id="A29819">
    <property type="entry name" value="CSRTA"/>
</dbReference>
<dbReference type="RefSeq" id="NP_058797.1">
    <property type="nucleotide sequence ID" value="NM_017101.1"/>
</dbReference>
<dbReference type="SMR" id="P10111"/>
<dbReference type="BioGRID" id="247550">
    <property type="interactions" value="5"/>
</dbReference>
<dbReference type="FunCoup" id="P10111">
    <property type="interactions" value="2024"/>
</dbReference>
<dbReference type="IntAct" id="P10111">
    <property type="interactions" value="4"/>
</dbReference>
<dbReference type="MINT" id="P10111"/>
<dbReference type="STRING" id="10116.ENSRNOP00000071404"/>
<dbReference type="BindingDB" id="P10111"/>
<dbReference type="ChEMBL" id="CHEMBL2780"/>
<dbReference type="GlyCosmos" id="P10111">
    <property type="glycosylation" value="1 site, No reported glycans"/>
</dbReference>
<dbReference type="GlyGen" id="P10111">
    <property type="glycosylation" value="1 site"/>
</dbReference>
<dbReference type="iPTMnet" id="P10111"/>
<dbReference type="PhosphoSitePlus" id="P10111"/>
<dbReference type="jPOST" id="P10111"/>
<dbReference type="PaxDb" id="10116-ENSRNOP00000009179"/>
<dbReference type="Ensembl" id="ENSRNOT00000106407.1">
    <property type="protein sequence ID" value="ENSRNOP00000089529.1"/>
    <property type="gene ID" value="ENSRNOG00000068764.1"/>
</dbReference>
<dbReference type="GeneID" id="25518"/>
<dbReference type="KEGG" id="rno:100360977"/>
<dbReference type="KEGG" id="rno:25518"/>
<dbReference type="UCSC" id="RGD:3372">
    <property type="organism name" value="rat"/>
</dbReference>
<dbReference type="AGR" id="RGD:2321083"/>
<dbReference type="AGR" id="RGD:3372"/>
<dbReference type="CTD" id="5478"/>
<dbReference type="CTD" id="645142"/>
<dbReference type="RGD" id="3372">
    <property type="gene designation" value="Ppia"/>
</dbReference>
<dbReference type="VEuPathDB" id="HostDB:ENSRNOG00000027864"/>
<dbReference type="eggNOG" id="KOG0865">
    <property type="taxonomic scope" value="Eukaryota"/>
</dbReference>
<dbReference type="GeneTree" id="ENSGT00950000183087"/>
<dbReference type="HOGENOM" id="CLU_012062_4_3_1"/>
<dbReference type="InParanoid" id="P10111"/>
<dbReference type="OrthoDB" id="1224at9989"/>
<dbReference type="PhylomeDB" id="P10111"/>
<dbReference type="TreeFam" id="TF316719"/>
<dbReference type="Reactome" id="R-RNO-210991">
    <property type="pathway name" value="Basigin interactions"/>
</dbReference>
<dbReference type="Reactome" id="R-RNO-6798695">
    <property type="pathway name" value="Neutrophil degranulation"/>
</dbReference>
<dbReference type="PRO" id="PR:P10111"/>
<dbReference type="Proteomes" id="UP000002494">
    <property type="component" value="Chromosome 14"/>
</dbReference>
<dbReference type="Bgee" id="ENSRNOG00000027864">
    <property type="expression patterns" value="Expressed in thymus and 20 other cell types or tissues"/>
</dbReference>
<dbReference type="ExpressionAtlas" id="P10111">
    <property type="expression patterns" value="baseline and differential"/>
</dbReference>
<dbReference type="GO" id="GO:0005737">
    <property type="term" value="C:cytoplasm"/>
    <property type="evidence" value="ECO:0000250"/>
    <property type="project" value="UniProtKB"/>
</dbReference>
<dbReference type="GO" id="GO:0005829">
    <property type="term" value="C:cytosol"/>
    <property type="evidence" value="ECO:0000250"/>
    <property type="project" value="UniProtKB"/>
</dbReference>
<dbReference type="GO" id="GO:0005576">
    <property type="term" value="C:extracellular region"/>
    <property type="evidence" value="ECO:0000250"/>
    <property type="project" value="UniProtKB"/>
</dbReference>
<dbReference type="GO" id="GO:0005615">
    <property type="term" value="C:extracellular space"/>
    <property type="evidence" value="ECO:0000266"/>
    <property type="project" value="RGD"/>
</dbReference>
<dbReference type="GO" id="GO:0005634">
    <property type="term" value="C:nucleus"/>
    <property type="evidence" value="ECO:0000250"/>
    <property type="project" value="UniProtKB"/>
</dbReference>
<dbReference type="GO" id="GO:0032991">
    <property type="term" value="C:protein-containing complex"/>
    <property type="evidence" value="ECO:0000266"/>
    <property type="project" value="RGD"/>
</dbReference>
<dbReference type="GO" id="GO:0016018">
    <property type="term" value="F:cyclosporin A binding"/>
    <property type="evidence" value="ECO:0000314"/>
    <property type="project" value="RGD"/>
</dbReference>
<dbReference type="GO" id="GO:1904399">
    <property type="term" value="F:heparan sulfate binding"/>
    <property type="evidence" value="ECO:0000250"/>
    <property type="project" value="UniProtKB"/>
</dbReference>
<dbReference type="GO" id="GO:0005178">
    <property type="term" value="F:integrin binding"/>
    <property type="evidence" value="ECO:0000250"/>
    <property type="project" value="UniProtKB"/>
</dbReference>
<dbReference type="GO" id="GO:0003755">
    <property type="term" value="F:peptidyl-prolyl cis-trans isomerase activity"/>
    <property type="evidence" value="ECO:0000250"/>
    <property type="project" value="UniProtKB"/>
</dbReference>
<dbReference type="GO" id="GO:0032148">
    <property type="term" value="P:activation of protein kinase B activity"/>
    <property type="evidence" value="ECO:0000250"/>
    <property type="project" value="UniProtKB"/>
</dbReference>
<dbReference type="GO" id="GO:0006915">
    <property type="term" value="P:apoptotic process"/>
    <property type="evidence" value="ECO:0000250"/>
    <property type="project" value="UniProtKB"/>
</dbReference>
<dbReference type="GO" id="GO:0060352">
    <property type="term" value="P:cell adhesion molecule production"/>
    <property type="evidence" value="ECO:0000250"/>
    <property type="project" value="UniProtKB"/>
</dbReference>
<dbReference type="GO" id="GO:0034599">
    <property type="term" value="P:cellular response to oxidative stress"/>
    <property type="evidence" value="ECO:0000250"/>
    <property type="project" value="UniProtKB"/>
</dbReference>
<dbReference type="GO" id="GO:0042118">
    <property type="term" value="P:endothelial cell activation"/>
    <property type="evidence" value="ECO:0000250"/>
    <property type="project" value="UniProtKB"/>
</dbReference>
<dbReference type="GO" id="GO:0030595">
    <property type="term" value="P:leukocyte chemotaxis"/>
    <property type="evidence" value="ECO:0000250"/>
    <property type="project" value="UniProtKB"/>
</dbReference>
<dbReference type="GO" id="GO:0034389">
    <property type="term" value="P:lipid droplet organization"/>
    <property type="evidence" value="ECO:0000266"/>
    <property type="project" value="RGD"/>
</dbReference>
<dbReference type="GO" id="GO:0106057">
    <property type="term" value="P:negative regulation of calcineurin-mediated signaling"/>
    <property type="evidence" value="ECO:0000314"/>
    <property type="project" value="RGD"/>
</dbReference>
<dbReference type="GO" id="GO:1902176">
    <property type="term" value="P:negative regulation of oxidative stress-induced intrinsic apoptotic signaling pathway"/>
    <property type="evidence" value="ECO:0000250"/>
    <property type="project" value="UniProtKB"/>
</dbReference>
<dbReference type="GO" id="GO:0061944">
    <property type="term" value="P:negative regulation of protein K48-linked ubiquitination"/>
    <property type="evidence" value="ECO:0000250"/>
    <property type="project" value="UniProtKB"/>
</dbReference>
<dbReference type="GO" id="GO:0006469">
    <property type="term" value="P:negative regulation of protein kinase activity"/>
    <property type="evidence" value="ECO:0000250"/>
    <property type="project" value="UniProtKB"/>
</dbReference>
<dbReference type="GO" id="GO:0001933">
    <property type="term" value="P:negative regulation of protein phosphorylation"/>
    <property type="evidence" value="ECO:0000250"/>
    <property type="project" value="UniProtKB"/>
</dbReference>
<dbReference type="GO" id="GO:0032873">
    <property type="term" value="P:negative regulation of stress-activated MAPK cascade"/>
    <property type="evidence" value="ECO:0000250"/>
    <property type="project" value="UniProtKB"/>
</dbReference>
<dbReference type="GO" id="GO:1903901">
    <property type="term" value="P:negative regulation of viral life cycle"/>
    <property type="evidence" value="ECO:0000266"/>
    <property type="project" value="RGD"/>
</dbReference>
<dbReference type="GO" id="GO:0030182">
    <property type="term" value="P:neuron differentiation"/>
    <property type="evidence" value="ECO:0000266"/>
    <property type="project" value="RGD"/>
</dbReference>
<dbReference type="GO" id="GO:0030593">
    <property type="term" value="P:neutrophil chemotaxis"/>
    <property type="evidence" value="ECO:0000250"/>
    <property type="project" value="UniProtKB"/>
</dbReference>
<dbReference type="GO" id="GO:0030168">
    <property type="term" value="P:platelet activation"/>
    <property type="evidence" value="ECO:0000250"/>
    <property type="project" value="UniProtKB"/>
</dbReference>
<dbReference type="GO" id="GO:0070527">
    <property type="term" value="P:platelet aggregation"/>
    <property type="evidence" value="ECO:0000250"/>
    <property type="project" value="UniProtKB"/>
</dbReference>
<dbReference type="GO" id="GO:0043410">
    <property type="term" value="P:positive regulation of MAPK cascade"/>
    <property type="evidence" value="ECO:0000250"/>
    <property type="project" value="UniProtKB"/>
</dbReference>
<dbReference type="GO" id="GO:0051092">
    <property type="term" value="P:positive regulation of NF-kappaB transcription factor activity"/>
    <property type="evidence" value="ECO:0000250"/>
    <property type="project" value="UniProtKB"/>
</dbReference>
<dbReference type="GO" id="GO:0001934">
    <property type="term" value="P:positive regulation of protein phosphorylation"/>
    <property type="evidence" value="ECO:0000250"/>
    <property type="project" value="UniProtKB"/>
</dbReference>
<dbReference type="GO" id="GO:0050714">
    <property type="term" value="P:positive regulation of protein secretion"/>
    <property type="evidence" value="ECO:0000266"/>
    <property type="project" value="RGD"/>
</dbReference>
<dbReference type="GO" id="GO:0045070">
    <property type="term" value="P:positive regulation of viral genome replication"/>
    <property type="evidence" value="ECO:0000266"/>
    <property type="project" value="RGD"/>
</dbReference>
<dbReference type="GO" id="GO:0006457">
    <property type="term" value="P:protein folding"/>
    <property type="evidence" value="ECO:0000318"/>
    <property type="project" value="GO_Central"/>
</dbReference>
<dbReference type="GO" id="GO:0000413">
    <property type="term" value="P:protein peptidyl-prolyl isomerization"/>
    <property type="evidence" value="ECO:0000250"/>
    <property type="project" value="UniProtKB"/>
</dbReference>
<dbReference type="GO" id="GO:2001233">
    <property type="term" value="P:regulation of apoptotic signaling pathway"/>
    <property type="evidence" value="ECO:0000250"/>
    <property type="project" value="UniProtKB"/>
</dbReference>
<dbReference type="GO" id="GO:0045069">
    <property type="term" value="P:regulation of viral genome replication"/>
    <property type="evidence" value="ECO:0000250"/>
    <property type="project" value="UniProtKB"/>
</dbReference>
<dbReference type="CDD" id="cd01926">
    <property type="entry name" value="cyclophilin_ABH_like"/>
    <property type="match status" value="1"/>
</dbReference>
<dbReference type="FunFam" id="2.40.100.10:FF:000011">
    <property type="entry name" value="Peptidyl-prolyl cis-trans isomerase A"/>
    <property type="match status" value="1"/>
</dbReference>
<dbReference type="Gene3D" id="2.40.100.10">
    <property type="entry name" value="Cyclophilin-like"/>
    <property type="match status" value="1"/>
</dbReference>
<dbReference type="InterPro" id="IPR029000">
    <property type="entry name" value="Cyclophilin-like_dom_sf"/>
</dbReference>
<dbReference type="InterPro" id="IPR024936">
    <property type="entry name" value="Cyclophilin-type_PPIase"/>
</dbReference>
<dbReference type="InterPro" id="IPR020892">
    <property type="entry name" value="Cyclophilin-type_PPIase_CS"/>
</dbReference>
<dbReference type="InterPro" id="IPR002130">
    <property type="entry name" value="Cyclophilin-type_PPIase_dom"/>
</dbReference>
<dbReference type="PANTHER" id="PTHR11071">
    <property type="entry name" value="PEPTIDYL-PROLYL CIS-TRANS ISOMERASE"/>
    <property type="match status" value="1"/>
</dbReference>
<dbReference type="PANTHER" id="PTHR11071:SF490">
    <property type="entry name" value="PEPTIDYL-PROLYL CIS-TRANS ISOMERASE A"/>
    <property type="match status" value="1"/>
</dbReference>
<dbReference type="Pfam" id="PF00160">
    <property type="entry name" value="Pro_isomerase"/>
    <property type="match status" value="1"/>
</dbReference>
<dbReference type="PIRSF" id="PIRSF001467">
    <property type="entry name" value="Peptidylpro_ismrse"/>
    <property type="match status" value="1"/>
</dbReference>
<dbReference type="PRINTS" id="PR00153">
    <property type="entry name" value="CSAPPISMRASE"/>
</dbReference>
<dbReference type="SUPFAM" id="SSF50891">
    <property type="entry name" value="Cyclophilin-like"/>
    <property type="match status" value="1"/>
</dbReference>
<dbReference type="PROSITE" id="PS00170">
    <property type="entry name" value="CSA_PPIASE_1"/>
    <property type="match status" value="1"/>
</dbReference>
<dbReference type="PROSITE" id="PS50072">
    <property type="entry name" value="CSA_PPIASE_2"/>
    <property type="match status" value="1"/>
</dbReference>
<sequence length="164" mass="17874">MVNPTVFFDITADGEPLGRVCFELFADKVPKTAENFRALSTGEKGFGYKGSSFHRIIPGFMCQGGDFTRHNGTGGKSIYGEKFEDENFILKHTGPGILSMANAGPNTNGSQFFICTAKTEWLDGKHVVFGKVKEGMSIVEAMERFGSRNGKTSKKITISDCGQL</sequence>
<name>PPIA_RAT</name>
<proteinExistence type="evidence at protein level"/>
<organism>
    <name type="scientific">Rattus norvegicus</name>
    <name type="common">Rat</name>
    <dbReference type="NCBI Taxonomy" id="10116"/>
    <lineage>
        <taxon>Eukaryota</taxon>
        <taxon>Metazoa</taxon>
        <taxon>Chordata</taxon>
        <taxon>Craniata</taxon>
        <taxon>Vertebrata</taxon>
        <taxon>Euteleostomi</taxon>
        <taxon>Mammalia</taxon>
        <taxon>Eutheria</taxon>
        <taxon>Euarchontoglires</taxon>
        <taxon>Glires</taxon>
        <taxon>Rodentia</taxon>
        <taxon>Myomorpha</taxon>
        <taxon>Muroidea</taxon>
        <taxon>Muridae</taxon>
        <taxon>Murinae</taxon>
        <taxon>Rattus</taxon>
    </lineage>
</organism>
<protein>
    <recommendedName>
        <fullName>Peptidyl-prolyl cis-trans isomerase A</fullName>
        <shortName>PPIase A</shortName>
        <ecNumber evidence="2">5.2.1.8</ecNumber>
    </recommendedName>
    <alternativeName>
        <fullName>Cyclophilin A</fullName>
    </alternativeName>
    <alternativeName>
        <fullName>Cyclosporin A-binding protein</fullName>
    </alternativeName>
    <alternativeName>
        <fullName>Rotamase A</fullName>
    </alternativeName>
    <alternativeName>
        <fullName>p1B15</fullName>
    </alternativeName>
    <alternativeName>
        <fullName>p31</fullName>
    </alternativeName>
    <component>
        <recommendedName>
            <fullName>Peptidyl-prolyl cis-trans isomerase A, N-terminally processed</fullName>
        </recommendedName>
    </component>
</protein>
<feature type="chain" id="PRO_0000423252" description="Peptidyl-prolyl cis-trans isomerase A">
    <location>
        <begin position="1"/>
        <end position="164"/>
    </location>
</feature>
<feature type="initiator methionine" description="Removed; alternate" evidence="5 6 7">
    <location>
        <position position="1"/>
    </location>
</feature>
<feature type="chain" id="PRO_0000064121" description="Peptidyl-prolyl cis-trans isomerase A, N-terminally processed">
    <location>
        <begin position="2"/>
        <end position="164"/>
    </location>
</feature>
<feature type="domain" description="PPIase cyclophilin-type" evidence="4">
    <location>
        <begin position="7"/>
        <end position="163"/>
    </location>
</feature>
<feature type="modified residue" description="N-acetylmethionine" evidence="2">
    <location>
        <position position="1"/>
    </location>
</feature>
<feature type="modified residue" description="N-acetylvaline; in Peptidyl-prolyl cis-trans isomerase A, N-terminally processed" evidence="7">
    <location>
        <position position="2"/>
    </location>
</feature>
<feature type="modified residue" description="N6-acetyllysine; alternate" evidence="2">
    <location>
        <position position="28"/>
    </location>
</feature>
<feature type="modified residue" description="N6-acetyllysine" evidence="2">
    <location>
        <position position="44"/>
    </location>
</feature>
<feature type="modified residue" description="N6-acetyllysine" evidence="2">
    <location>
        <position position="76"/>
    </location>
</feature>
<feature type="modified residue" description="Phosphoserine" evidence="2">
    <location>
        <position position="77"/>
    </location>
</feature>
<feature type="modified residue" description="N6-acetyllysine; alternate" evidence="2">
    <location>
        <position position="82"/>
    </location>
</feature>
<feature type="modified residue" description="Phosphothreonine" evidence="2">
    <location>
        <position position="93"/>
    </location>
</feature>
<feature type="modified residue" description="N6-acetyllysine" evidence="2">
    <location>
        <position position="125"/>
    </location>
</feature>
<feature type="modified residue" description="N6-acetyllysine" evidence="2">
    <location>
        <position position="131"/>
    </location>
</feature>
<feature type="modified residue" description="N6-acetyllysine" evidence="1">
    <location>
        <position position="133"/>
    </location>
</feature>
<feature type="glycosylation site" description="N-linked (GlcNAc...) asparagine" evidence="3">
    <location>
        <position position="108"/>
    </location>
</feature>
<feature type="cross-link" description="Glycyl lysine isopeptide (Lys-Gly) (interchain with G-Cter in SUMO2); alternate" evidence="2">
    <location>
        <position position="28"/>
    </location>
</feature>
<feature type="cross-link" description="Glycyl lysine isopeptide (Lys-Gly) (interchain with G-Cter in ubiquitin); alternate" evidence="2">
    <location>
        <position position="28"/>
    </location>
</feature>
<feature type="cross-link" description="Glycyl lysine isopeptide (Lys-Gly) (interchain with G-Cter in SUMO2); alternate" evidence="2">
    <location>
        <position position="82"/>
    </location>
</feature>
<evidence type="ECO:0000250" key="1">
    <source>
        <dbReference type="UniProtKB" id="P17742"/>
    </source>
</evidence>
<evidence type="ECO:0000250" key="2">
    <source>
        <dbReference type="UniProtKB" id="P62937"/>
    </source>
</evidence>
<evidence type="ECO:0000255" key="3"/>
<evidence type="ECO:0000255" key="4">
    <source>
        <dbReference type="PROSITE-ProRule" id="PRU00156"/>
    </source>
</evidence>
<evidence type="ECO:0000269" key="5">
    <source>
    </source>
</evidence>
<evidence type="ECO:0000269" key="6">
    <source ref="5"/>
</evidence>
<evidence type="ECO:0000269" key="7">
    <source ref="7"/>
</evidence>
<evidence type="ECO:0000305" key="8"/>
<accession>P10111</accession>
<accession>P18303</accession>
<accession>Q5BK98</accession>
<comment type="function">
    <text evidence="1 2">Catalyzes the cis-trans isomerization of proline imidic peptide bonds in oligopeptides (By similarity). Exerts a strong chemotactic effect on leukocytes partly through activation of one of its membrane receptors BSG/CD147, initiating a signaling cascade that culminates in MAPK/ERK activation (By similarity). Activates endothelial cells (ECs) in a proinflammatory manner by stimulating activation of NF-kappa-B and ERK, JNK and p38 MAP-kinases and by inducing expression of adhesion molecules including SELE and VCAM1 (By similarity). Induces apoptosis in ECs by promoting the FOXO1-dependent expression of CCL2 and BCL2L11 which are involved in EC chemotaxis and apoptosis (By similarity). In response to oxidative stress, initiates proapoptotic and antiapoptotic signaling in ECs via activation of NF-kappa-B and AKT1 and up-regulation of antiapoptotic protein BCL2 (By similarity). Negatively regulates MAP3K5/ASK1 kinase activity, autophosphorylation and oxidative stress-induced apoptosis mediated by MAP3K5/ASK1 (By similarity). Necessary for the assembly of TARDBP in heterogeneous nuclear ribonucleoprotein (hnRNP) complexes and regulates TARDBP binding to RNA UG repeats and TARDBP-dependent expression of HDAC6, ATG7 and VCP which are involved in clearance of protein aggregates (By similarity). Plays an important role in platelet activation and aggregation (By similarity). Regulates calcium mobilization and integrin ITGA2B:ITGB3 bidirectional signaling via increased ROS production as well as by facilitating the interaction between integrin and the cell cytoskeleton (By similarity). Binds heparan sulfate glycosaminoglycans (By similarity).</text>
</comment>
<comment type="catalytic activity">
    <reaction evidence="2">
        <text>[protein]-peptidylproline (omega=180) = [protein]-peptidylproline (omega=0)</text>
        <dbReference type="Rhea" id="RHEA:16237"/>
        <dbReference type="Rhea" id="RHEA-COMP:10747"/>
        <dbReference type="Rhea" id="RHEA-COMP:10748"/>
        <dbReference type="ChEBI" id="CHEBI:83833"/>
        <dbReference type="ChEBI" id="CHEBI:83834"/>
        <dbReference type="EC" id="5.2.1.8"/>
    </reaction>
</comment>
<comment type="activity regulation">
    <text evidence="2">Binds cyclosporin A (CsA). CsA mediates some of its effects via an inhibitory action on PPIase.</text>
</comment>
<comment type="subunit">
    <text evidence="1 2">Interacts with protein phosphatase PPP3CA/calcineurin A (By similarity). Interacts with isoform 2 of BSG/CD147 (By similarity). Interacts with FOXO1; the interaction promotes FOXO1 dephosphorylation, nuclear accumulation and transcriptional activity (By similarity). Interacts with integrin ITGA2B:ITGB3; the interaction is ROS and peptidyl-prolyl cis-trans isomerase (PPIase) activity-dependent and is increased in the presence of thrombin (By similarity). Interacts with MAP3K5 (By similarity). Interacts with TARDBP; the interaction is dependent on the RNA-binding activity of TARDBP and the PPIase activity of PPIA/CYPA and the acetylation of PPIA/CYPA at Lys-125 favors the interaction (By similarity). Interacts with HNRNPA1, HNRNPA2B1, HNRNPC, RBMX, HNRNPK and HNRNPM (By similarity).</text>
</comment>
<comment type="subcellular location">
    <subcellularLocation>
        <location evidence="2">Cytoplasm</location>
    </subcellularLocation>
    <subcellularLocation>
        <location evidence="2">Secreted</location>
    </subcellularLocation>
    <subcellularLocation>
        <location evidence="2">Nucleus</location>
    </subcellularLocation>
    <text evidence="2">Secretion occurs in response to oxidative stress in vascular smooth muscle through a vesicular secretory pathway that involves actin remodeling and myosin II activation, and mediates ERK1/2 activation.</text>
</comment>
<comment type="PTM">
    <text evidence="2">Acetylation at Lys-125 markedly inhibits catalysis of cis to trans isomerization (By similarity). PPIA acetylation also antagonizes the immunosuppressive effects of cyclosporine by inhibiting the sequential steps of cyclosporine binding and calcineurin inhibition (By similarity). Acetylation at Lys-125 favors the interaction with TARDBP (By similarity).</text>
</comment>
<comment type="similarity">
    <text evidence="8">Belongs to the cyclophilin-type PPIase family. PPIase A subfamily.</text>
</comment>
<keyword id="KW-0007">Acetylation</keyword>
<keyword id="KW-0053">Apoptosis</keyword>
<keyword id="KW-0963">Cytoplasm</keyword>
<keyword id="KW-0903">Direct protein sequencing</keyword>
<keyword id="KW-0325">Glycoprotein</keyword>
<keyword id="KW-0413">Isomerase</keyword>
<keyword id="KW-1017">Isopeptide bond</keyword>
<keyword id="KW-0539">Nucleus</keyword>
<keyword id="KW-0597">Phosphoprotein</keyword>
<keyword id="KW-1185">Reference proteome</keyword>
<keyword id="KW-0697">Rotamase</keyword>
<keyword id="KW-0964">Secreted</keyword>
<keyword id="KW-0832">Ubl conjugation</keyword>